<name>PLAC8_PONAB</name>
<keyword id="KW-1185">Reference proteome</keyword>
<accession>Q5REK4</accession>
<organism>
    <name type="scientific">Pongo abelii</name>
    <name type="common">Sumatran orangutan</name>
    <name type="synonym">Pongo pygmaeus abelii</name>
    <dbReference type="NCBI Taxonomy" id="9601"/>
    <lineage>
        <taxon>Eukaryota</taxon>
        <taxon>Metazoa</taxon>
        <taxon>Chordata</taxon>
        <taxon>Craniata</taxon>
        <taxon>Vertebrata</taxon>
        <taxon>Euteleostomi</taxon>
        <taxon>Mammalia</taxon>
        <taxon>Eutheria</taxon>
        <taxon>Euarchontoglires</taxon>
        <taxon>Primates</taxon>
        <taxon>Haplorrhini</taxon>
        <taxon>Catarrhini</taxon>
        <taxon>Hominidae</taxon>
        <taxon>Pongo</taxon>
    </lineage>
</organism>
<reference key="1">
    <citation type="submission" date="2004-11" db="EMBL/GenBank/DDBJ databases">
        <authorList>
            <consortium name="The German cDNA consortium"/>
        </authorList>
    </citation>
    <scope>NUCLEOTIDE SEQUENCE [LARGE SCALE MRNA]</scope>
    <source>
        <tissue>Heart</tissue>
    </source>
</reference>
<feature type="chain" id="PRO_0000253637" description="Placenta-specific gene 8 protein">
    <location>
        <begin position="1"/>
        <end position="115"/>
    </location>
</feature>
<gene>
    <name type="primary">PLAC8</name>
</gene>
<proteinExistence type="inferred from homology"/>
<sequence length="115" mass="12541">MQAQAPVVVVTQPGVGPGPAPQNSNWQTGMCDCFSDCGVCLCGTFCFPCLGCQVAADMNECCLCGTSVAMRTLYRTRYGIPGSICDDYMATFCCPHCTLCQIKRDINRRRAMRTF</sequence>
<dbReference type="EMBL" id="CR857521">
    <property type="protein sequence ID" value="CAH89803.1"/>
    <property type="molecule type" value="mRNA"/>
</dbReference>
<dbReference type="RefSeq" id="NP_001124833.1">
    <property type="nucleotide sequence ID" value="NM_001131361.1"/>
</dbReference>
<dbReference type="RefSeq" id="XP_009238431.1">
    <property type="nucleotide sequence ID" value="XM_009240156.4"/>
</dbReference>
<dbReference type="FunCoup" id="Q5REK4">
    <property type="interactions" value="20"/>
</dbReference>
<dbReference type="STRING" id="9601.ENSPPYP00000016632"/>
<dbReference type="Ensembl" id="ENSPPYT00000017309.3">
    <property type="protein sequence ID" value="ENSPPYP00000016632.2"/>
    <property type="gene ID" value="ENSPPYG00000014894.3"/>
</dbReference>
<dbReference type="GeneID" id="100171691"/>
<dbReference type="KEGG" id="pon:100171691"/>
<dbReference type="CTD" id="51316"/>
<dbReference type="eggNOG" id="ENOG502S3TI">
    <property type="taxonomic scope" value="Eukaryota"/>
</dbReference>
<dbReference type="GeneTree" id="ENSGT00940000157329"/>
<dbReference type="HOGENOM" id="CLU_083147_5_2_1"/>
<dbReference type="InParanoid" id="Q5REK4"/>
<dbReference type="OMA" id="YLATLCC"/>
<dbReference type="OrthoDB" id="1045822at2759"/>
<dbReference type="TreeFam" id="TF330308"/>
<dbReference type="Proteomes" id="UP000001595">
    <property type="component" value="Chromosome 4"/>
</dbReference>
<dbReference type="GO" id="GO:0003682">
    <property type="term" value="F:chromatin binding"/>
    <property type="evidence" value="ECO:0007669"/>
    <property type="project" value="Ensembl"/>
</dbReference>
<dbReference type="GO" id="GO:0050873">
    <property type="term" value="P:brown fat cell differentiation"/>
    <property type="evidence" value="ECO:0007669"/>
    <property type="project" value="Ensembl"/>
</dbReference>
<dbReference type="GO" id="GO:0042742">
    <property type="term" value="P:defense response to bacterium"/>
    <property type="evidence" value="ECO:0007669"/>
    <property type="project" value="Ensembl"/>
</dbReference>
<dbReference type="GO" id="GO:0043066">
    <property type="term" value="P:negative regulation of apoptotic process"/>
    <property type="evidence" value="ECO:0007669"/>
    <property type="project" value="Ensembl"/>
</dbReference>
<dbReference type="GO" id="GO:0040015">
    <property type="term" value="P:negative regulation of multicellular organism growth"/>
    <property type="evidence" value="ECO:0007669"/>
    <property type="project" value="Ensembl"/>
</dbReference>
<dbReference type="GO" id="GO:0008284">
    <property type="term" value="P:positive regulation of cell population proliferation"/>
    <property type="evidence" value="ECO:0007669"/>
    <property type="project" value="Ensembl"/>
</dbReference>
<dbReference type="GO" id="GO:0120162">
    <property type="term" value="P:positive regulation of cold-induced thermogenesis"/>
    <property type="evidence" value="ECO:0007669"/>
    <property type="project" value="Ensembl"/>
</dbReference>
<dbReference type="GO" id="GO:0045944">
    <property type="term" value="P:positive regulation of transcription by RNA polymerase II"/>
    <property type="evidence" value="ECO:0007669"/>
    <property type="project" value="Ensembl"/>
</dbReference>
<dbReference type="GO" id="GO:0009409">
    <property type="term" value="P:response to cold"/>
    <property type="evidence" value="ECO:0007669"/>
    <property type="project" value="Ensembl"/>
</dbReference>
<dbReference type="GO" id="GO:0006366">
    <property type="term" value="P:transcription by RNA polymerase II"/>
    <property type="evidence" value="ECO:0007669"/>
    <property type="project" value="Ensembl"/>
</dbReference>
<dbReference type="InterPro" id="IPR006461">
    <property type="entry name" value="PLAC_motif_containing"/>
</dbReference>
<dbReference type="NCBIfam" id="TIGR01571">
    <property type="entry name" value="A_thal_Cys_rich"/>
    <property type="match status" value="1"/>
</dbReference>
<dbReference type="PANTHER" id="PTHR15907">
    <property type="entry name" value="DUF614 FAMILY PROTEIN-RELATED"/>
    <property type="match status" value="1"/>
</dbReference>
<dbReference type="Pfam" id="PF04749">
    <property type="entry name" value="PLAC8"/>
    <property type="match status" value="1"/>
</dbReference>
<evidence type="ECO:0000305" key="1"/>
<comment type="similarity">
    <text evidence="1">Belongs to the cornifelin family.</text>
</comment>
<protein>
    <recommendedName>
        <fullName>Placenta-specific gene 8 protein</fullName>
    </recommendedName>
</protein>